<evidence type="ECO:0000250" key="1">
    <source>
        <dbReference type="UniProtKB" id="A0A0M3KKW3"/>
    </source>
</evidence>
<evidence type="ECO:0000250" key="2">
    <source>
        <dbReference type="UniProtKB" id="A2VBC4"/>
    </source>
</evidence>
<evidence type="ECO:0000250" key="3">
    <source>
        <dbReference type="UniProtKB" id="P0DMB4"/>
    </source>
</evidence>
<evidence type="ECO:0000250" key="4">
    <source>
        <dbReference type="UniProtKB" id="P0DMB7"/>
    </source>
</evidence>
<evidence type="ECO:0000255" key="5"/>
<evidence type="ECO:0000255" key="6">
    <source>
        <dbReference type="PROSITE-ProRule" id="PRU10037"/>
    </source>
</evidence>
<evidence type="ECO:0000269" key="7">
    <source>
    </source>
</evidence>
<evidence type="ECO:0000303" key="8">
    <source>
    </source>
</evidence>
<evidence type="ECO:0000305" key="9"/>
<evidence type="ECO:0000305" key="10">
    <source>
    </source>
</evidence>
<keyword id="KW-0020">Allergen</keyword>
<keyword id="KW-0204">Cytolysis</keyword>
<keyword id="KW-0903">Direct protein sequencing</keyword>
<keyword id="KW-1015">Disulfide bond</keyword>
<keyword id="KW-0354">Hemolysis</keyword>
<keyword id="KW-0378">Hydrolase</keyword>
<keyword id="KW-0442">Lipid degradation</keyword>
<keyword id="KW-0443">Lipid metabolism</keyword>
<keyword id="KW-0964">Secreted</keyword>
<keyword id="KW-0732">Signal</keyword>
<protein>
    <recommendedName>
        <fullName evidence="8">Phospholipase A1 1</fullName>
        <shortName evidence="9">PLA1 1</shortName>
        <ecNumber evidence="4">3.1.1.32</ecNumber>
    </recommendedName>
    <allergenName evidence="8">Pol d 1</allergenName>
</protein>
<organism>
    <name type="scientific">Polistes dominula</name>
    <name type="common">European paper wasp</name>
    <name type="synonym">Vespa dominula</name>
    <dbReference type="NCBI Taxonomy" id="743375"/>
    <lineage>
        <taxon>Eukaryota</taxon>
        <taxon>Metazoa</taxon>
        <taxon>Ecdysozoa</taxon>
        <taxon>Arthropoda</taxon>
        <taxon>Hexapoda</taxon>
        <taxon>Insecta</taxon>
        <taxon>Pterygota</taxon>
        <taxon>Neoptera</taxon>
        <taxon>Endopterygota</taxon>
        <taxon>Hymenoptera</taxon>
        <taxon>Apocrita</taxon>
        <taxon>Aculeata</taxon>
        <taxon>Vespoidea</taxon>
        <taxon>Vespidae</taxon>
        <taxon>Polistinae</taxon>
        <taxon>Polistini</taxon>
        <taxon>Polistes</taxon>
    </lineage>
</organism>
<dbReference type="EC" id="3.1.1.32" evidence="4"/>
<dbReference type="EMBL" id="AY566645">
    <property type="protein sequence ID" value="AAS67041.1"/>
    <property type="molecule type" value="mRNA"/>
</dbReference>
<dbReference type="RefSeq" id="XP_015187185.1">
    <property type="nucleotide sequence ID" value="XM_015331699.1"/>
</dbReference>
<dbReference type="SMR" id="Q6Q252"/>
<dbReference type="Allergome" id="3433">
    <property type="allergen name" value="Pol d 1.0101"/>
</dbReference>
<dbReference type="Allergome" id="586">
    <property type="allergen name" value="Pol d 1"/>
</dbReference>
<dbReference type="ESTHER" id="poldo-q6q252">
    <property type="family name" value="Insect_Phospholipase"/>
</dbReference>
<dbReference type="EnsemblMetazoa" id="XM_015331699.1">
    <property type="protein sequence ID" value="XP_015187185.1"/>
    <property type="gene ID" value="LOC107072087"/>
</dbReference>
<dbReference type="GeneID" id="107072087"/>
<dbReference type="OrthoDB" id="8183961at2759"/>
<dbReference type="BRENDA" id="3.1.1.32">
    <property type="organism ID" value="8173"/>
</dbReference>
<dbReference type="Proteomes" id="UP000694924">
    <property type="component" value="Unplaced"/>
</dbReference>
<dbReference type="GO" id="GO:0005615">
    <property type="term" value="C:extracellular space"/>
    <property type="evidence" value="ECO:0007669"/>
    <property type="project" value="TreeGrafter"/>
</dbReference>
<dbReference type="GO" id="GO:0008970">
    <property type="term" value="F:phospholipase A1 activity"/>
    <property type="evidence" value="ECO:0007669"/>
    <property type="project" value="UniProtKB-EC"/>
</dbReference>
<dbReference type="GO" id="GO:0031640">
    <property type="term" value="P:killing of cells of another organism"/>
    <property type="evidence" value="ECO:0007669"/>
    <property type="project" value="UniProtKB-KW"/>
</dbReference>
<dbReference type="GO" id="GO:0016042">
    <property type="term" value="P:lipid catabolic process"/>
    <property type="evidence" value="ECO:0007669"/>
    <property type="project" value="UniProtKB-KW"/>
</dbReference>
<dbReference type="CDD" id="cd00707">
    <property type="entry name" value="Pancreat_lipase_like"/>
    <property type="match status" value="1"/>
</dbReference>
<dbReference type="Gene3D" id="3.40.50.1820">
    <property type="entry name" value="alpha/beta hydrolase"/>
    <property type="match status" value="1"/>
</dbReference>
<dbReference type="InterPro" id="IPR029058">
    <property type="entry name" value="AB_hydrolase_fold"/>
</dbReference>
<dbReference type="InterPro" id="IPR002334">
    <property type="entry name" value="Allerg_PlipaseA1"/>
</dbReference>
<dbReference type="InterPro" id="IPR013818">
    <property type="entry name" value="Lipase"/>
</dbReference>
<dbReference type="InterPro" id="IPR033906">
    <property type="entry name" value="Lipase_N"/>
</dbReference>
<dbReference type="InterPro" id="IPR000734">
    <property type="entry name" value="TAG_lipase"/>
</dbReference>
<dbReference type="PANTHER" id="PTHR11610">
    <property type="entry name" value="LIPASE"/>
    <property type="match status" value="1"/>
</dbReference>
<dbReference type="PANTHER" id="PTHR11610:SF173">
    <property type="entry name" value="LIPASE DOMAIN-CONTAINING PROTEIN-RELATED"/>
    <property type="match status" value="1"/>
</dbReference>
<dbReference type="Pfam" id="PF00151">
    <property type="entry name" value="Lipase"/>
    <property type="match status" value="1"/>
</dbReference>
<dbReference type="PRINTS" id="PR00825">
    <property type="entry name" value="DOLALLERGEN"/>
</dbReference>
<dbReference type="SUPFAM" id="SSF53474">
    <property type="entry name" value="alpha/beta-Hydrolases"/>
    <property type="match status" value="1"/>
</dbReference>
<dbReference type="PROSITE" id="PS00120">
    <property type="entry name" value="LIPASE_SER"/>
    <property type="match status" value="1"/>
</dbReference>
<sequence length="337" mass="37559">MNFKYSILFICFVKVLDNCYAADDLTTLRNGTLDRGITPDCTFNEKDIELHVYSRDKRNGIILKKEILKNYDLFQKSQISHQIAILIHGFLSTGNNENFDAMAKALIEIDNFLVISVDWKKGACNAFASTNDVLGYSQAVGNTRHVGKYVADFTKLLVEQYKVPMSNIRLIGHSLGAHTSGFAGKEVQRLKLGKYKEIIGLDPAGPSFLTNKCPNRLCETDAEYVQAIHTSAILGVYYNVGSVDFYVNYGKSQPGCSEPSCSHTKAVKYLTECIKRECCLIGTPWKSYFSTPKPISQCKRDTCVCVGLNAQSYPAKGSFYVPVDKDAPYCHNEGIKL</sequence>
<feature type="signal peptide" evidence="5">
    <location>
        <begin position="1"/>
        <end position="21"/>
    </location>
</feature>
<feature type="propeptide" id="PRO_5000093090" evidence="10">
    <location>
        <begin position="22"/>
        <end position="35"/>
    </location>
</feature>
<feature type="chain" id="PRO_5000093091" description="Phospholipase A1 1" evidence="7">
    <location>
        <begin position="36"/>
        <end position="337"/>
    </location>
</feature>
<feature type="active site" description="Nucleophile" evidence="1">
    <location>
        <position position="174"/>
    </location>
</feature>
<feature type="active site" description="Charge relay system" evidence="6">
    <location>
        <position position="202"/>
    </location>
</feature>
<feature type="active site" description="Charge relay system" evidence="6">
    <location>
        <position position="263"/>
    </location>
</feature>
<feature type="disulfide bond" evidence="1">
    <location>
        <begin position="41"/>
        <end position="124"/>
    </location>
</feature>
<feature type="disulfide bond" evidence="1">
    <location>
        <begin position="213"/>
        <end position="218"/>
    </location>
</feature>
<feature type="disulfide bond" evidence="1">
    <location>
        <begin position="256"/>
        <end position="261"/>
    </location>
</feature>
<feature type="disulfide bond" evidence="1">
    <location>
        <begin position="278"/>
        <end position="305"/>
    </location>
</feature>
<feature type="disulfide bond" evidence="1">
    <location>
        <begin position="279"/>
        <end position="330"/>
    </location>
</feature>
<feature type="disulfide bond" evidence="1">
    <location>
        <begin position="298"/>
        <end position="303"/>
    </location>
</feature>
<accession>Q6Q252</accession>
<reference key="1">
    <citation type="journal article" date="2005" name="Acta Biol. Hung.">
        <title>Isolation, cloning and characterization of Polistes dominulus venom phospholipase A1 and its isoforms.</title>
        <authorList>
            <person name="Moawad T.I."/>
            <person name="Hoffman D.R."/>
            <person name="Zalat S."/>
        </authorList>
    </citation>
    <scope>NUCLEOTIDE SEQUENCE [MRNA]</scope>
    <scope>PROTEIN SEQUENCE OF 36-64; 70-82; 86-91; 105-212; 252-265 AND 270-337</scope>
    <scope>SUBCELLULAR LOCATION</scope>
    <source>
        <tissue>Venom</tissue>
        <tissue>Venom gland</tissue>
    </source>
</reference>
<proteinExistence type="evidence at protein level"/>
<comment type="function">
    <text evidence="3 4">Catalyzes the hydrolysis of phosphatidylcholine with phospholipase A1 activity (By similarity). May act as an allergen and induce hemolytic activity (By similarity).</text>
</comment>
<comment type="catalytic activity">
    <reaction evidence="3">
        <text>a 1,2-diacyl-sn-glycero-3-phosphocholine + H2O = a 2-acyl-sn-glycero-3-phosphocholine + a fatty acid + H(+)</text>
        <dbReference type="Rhea" id="RHEA:18689"/>
        <dbReference type="ChEBI" id="CHEBI:15377"/>
        <dbReference type="ChEBI" id="CHEBI:15378"/>
        <dbReference type="ChEBI" id="CHEBI:28868"/>
        <dbReference type="ChEBI" id="CHEBI:57643"/>
        <dbReference type="ChEBI" id="CHEBI:57875"/>
        <dbReference type="EC" id="3.1.1.32"/>
    </reaction>
</comment>
<comment type="subcellular location">
    <subcellularLocation>
        <location evidence="7">Secreted</location>
    </subcellularLocation>
</comment>
<comment type="tissue specificity">
    <text evidence="10">Expressed by the venom gland.</text>
</comment>
<comment type="allergen">
    <text evidence="2">Causes an allergic reaction in human. Binds to IgE.</text>
</comment>
<comment type="similarity">
    <text evidence="9">Belongs to the AB hydrolase superfamily. Lipase family.</text>
</comment>
<name>PA11_POLDO</name>